<geneLocation type="plasmid">
    <name>sym pNGR234a</name>
</geneLocation>
<dbReference type="EMBL" id="U00090">
    <property type="protein sequence ID" value="AAB91907.1"/>
    <property type="molecule type" value="Genomic_DNA"/>
</dbReference>
<dbReference type="RefSeq" id="NP_444120.1">
    <property type="nucleotide sequence ID" value="NC_000914.2"/>
</dbReference>
<dbReference type="RefSeq" id="WP_010875146.1">
    <property type="nucleotide sequence ID" value="NC_000914.2"/>
</dbReference>
<dbReference type="KEGG" id="rhi:NGR_a01050"/>
<dbReference type="PATRIC" id="fig|394.7.peg.90"/>
<dbReference type="eggNOG" id="COG3383">
    <property type="taxonomic scope" value="Bacteria"/>
</dbReference>
<dbReference type="HOGENOM" id="CLU_155272_0_0_5"/>
<dbReference type="OrthoDB" id="9810688at2"/>
<dbReference type="Proteomes" id="UP000001054">
    <property type="component" value="Plasmid pNGR234a"/>
</dbReference>
<dbReference type="GO" id="GO:0051539">
    <property type="term" value="F:4 iron, 4 sulfur cluster binding"/>
    <property type="evidence" value="ECO:0007669"/>
    <property type="project" value="UniProtKB-KW"/>
</dbReference>
<dbReference type="GO" id="GO:0046872">
    <property type="term" value="F:metal ion binding"/>
    <property type="evidence" value="ECO:0007669"/>
    <property type="project" value="UniProtKB-KW"/>
</dbReference>
<dbReference type="GO" id="GO:0009399">
    <property type="term" value="P:nitrogen fixation"/>
    <property type="evidence" value="ECO:0007669"/>
    <property type="project" value="UniProtKB-KW"/>
</dbReference>
<dbReference type="Gene3D" id="3.30.70.20">
    <property type="match status" value="2"/>
</dbReference>
<dbReference type="InterPro" id="IPR017896">
    <property type="entry name" value="4Fe4S_Fe-S-bd"/>
</dbReference>
<dbReference type="InterPro" id="IPR017900">
    <property type="entry name" value="4Fe4S_Fe_S_CS"/>
</dbReference>
<dbReference type="InterPro" id="IPR014283">
    <property type="entry name" value="FdIII_4_nif"/>
</dbReference>
<dbReference type="InterPro" id="IPR050572">
    <property type="entry name" value="Fe-S_Ferredoxin"/>
</dbReference>
<dbReference type="NCBIfam" id="TIGR02936">
    <property type="entry name" value="fdxN_nitrog"/>
    <property type="match status" value="1"/>
</dbReference>
<dbReference type="PANTHER" id="PTHR43687">
    <property type="entry name" value="ADENYLYLSULFATE REDUCTASE, BETA SUBUNIT"/>
    <property type="match status" value="1"/>
</dbReference>
<dbReference type="PANTHER" id="PTHR43687:SF1">
    <property type="entry name" value="FERREDOXIN III"/>
    <property type="match status" value="1"/>
</dbReference>
<dbReference type="Pfam" id="PF12838">
    <property type="entry name" value="Fer4_7"/>
    <property type="match status" value="1"/>
</dbReference>
<dbReference type="SUPFAM" id="SSF46548">
    <property type="entry name" value="alpha-helical ferredoxin"/>
    <property type="match status" value="1"/>
</dbReference>
<dbReference type="PROSITE" id="PS00198">
    <property type="entry name" value="4FE4S_FER_1"/>
    <property type="match status" value="1"/>
</dbReference>
<dbReference type="PROSITE" id="PS51379">
    <property type="entry name" value="4FE4S_FER_2"/>
    <property type="match status" value="2"/>
</dbReference>
<name>FER3_SINFN</name>
<sequence>MTSHFVTRDGSTWMPQYLTAIDAMTCIGCGRCFKVCSREVMHLHGIDESGEILGACDGEDDDFAGELSRTIMVVDHAGRCIGCGACARVCPKNCQTHVAADEIVA</sequence>
<keyword id="KW-0004">4Fe-4S</keyword>
<keyword id="KW-0249">Electron transport</keyword>
<keyword id="KW-0408">Iron</keyword>
<keyword id="KW-0411">Iron-sulfur</keyword>
<keyword id="KW-0479">Metal-binding</keyword>
<keyword id="KW-0535">Nitrogen fixation</keyword>
<keyword id="KW-0614">Plasmid</keyword>
<keyword id="KW-1185">Reference proteome</keyword>
<keyword id="KW-0677">Repeat</keyword>
<keyword id="KW-0813">Transport</keyword>
<evidence type="ECO:0000250" key="1"/>
<evidence type="ECO:0000255" key="2">
    <source>
        <dbReference type="PROSITE-ProRule" id="PRU00711"/>
    </source>
</evidence>
<comment type="function">
    <text>Ferredoxins are iron-sulfur proteins that transfer electrons in a wide variety of metabolic reactions.</text>
</comment>
<comment type="cofactor">
    <cofactor evidence="1">
        <name>[4Fe-4S] cluster</name>
        <dbReference type="ChEBI" id="CHEBI:49883"/>
    </cofactor>
    <text evidence="1">Binds 2 [4Fe-4S] clusters.</text>
</comment>
<protein>
    <recommendedName>
        <fullName>Putative ferredoxin-3</fullName>
    </recommendedName>
    <alternativeName>
        <fullName>Ferredoxin III</fullName>
        <shortName>FdIII</shortName>
    </alternativeName>
</protein>
<reference key="1">
    <citation type="journal article" date="1997" name="Nature">
        <title>Molecular basis of symbiosis between Rhizobium and legumes.</title>
        <authorList>
            <person name="Freiberg C.A."/>
            <person name="Fellay R."/>
            <person name="Bairoch A."/>
            <person name="Broughton W.J."/>
            <person name="Rosenthal A."/>
            <person name="Perret X."/>
        </authorList>
    </citation>
    <scope>NUCLEOTIDE SEQUENCE [LARGE SCALE GENOMIC DNA]</scope>
    <source>
        <strain>NBRC 101917 / NGR234</strain>
    </source>
</reference>
<reference key="2">
    <citation type="journal article" date="2009" name="Appl. Environ. Microbiol.">
        <title>Rhizobium sp. strain NGR234 possesses a remarkable number of secretion systems.</title>
        <authorList>
            <person name="Schmeisser C."/>
            <person name="Liesegang H."/>
            <person name="Krysciak D."/>
            <person name="Bakkou N."/>
            <person name="Le Quere A."/>
            <person name="Wollherr A."/>
            <person name="Heinemeyer I."/>
            <person name="Morgenstern B."/>
            <person name="Pommerening-Roeser A."/>
            <person name="Flores M."/>
            <person name="Palacios R."/>
            <person name="Brenner S."/>
            <person name="Gottschalk G."/>
            <person name="Schmitz R.A."/>
            <person name="Broughton W.J."/>
            <person name="Perret X."/>
            <person name="Strittmatter A.W."/>
            <person name="Streit W.R."/>
        </authorList>
    </citation>
    <scope>NUCLEOTIDE SEQUENCE [LARGE SCALE GENOMIC DNA]</scope>
    <source>
        <strain>NBRC 101917 / NGR234</strain>
    </source>
</reference>
<organism>
    <name type="scientific">Sinorhizobium fredii (strain NBRC 101917 / NGR234)</name>
    <dbReference type="NCBI Taxonomy" id="394"/>
    <lineage>
        <taxon>Bacteria</taxon>
        <taxon>Pseudomonadati</taxon>
        <taxon>Pseudomonadota</taxon>
        <taxon>Alphaproteobacteria</taxon>
        <taxon>Hyphomicrobiales</taxon>
        <taxon>Rhizobiaceae</taxon>
        <taxon>Sinorhizobium/Ensifer group</taxon>
        <taxon>Sinorhizobium</taxon>
    </lineage>
</organism>
<feature type="chain" id="PRO_0000159188" description="Putative ferredoxin-3">
    <location>
        <begin position="1"/>
        <end position="105"/>
    </location>
</feature>
<feature type="domain" description="4Fe-4S ferredoxin-type 1" evidence="2">
    <location>
        <begin position="17"/>
        <end position="46"/>
    </location>
</feature>
<feature type="domain" description="4Fe-4S ferredoxin-type 2" evidence="2">
    <location>
        <begin position="70"/>
        <end position="100"/>
    </location>
</feature>
<feature type="binding site" evidence="1">
    <location>
        <position position="26"/>
    </location>
    <ligand>
        <name>[4Fe-4S] cluster</name>
        <dbReference type="ChEBI" id="CHEBI:49883"/>
        <label>1</label>
    </ligand>
</feature>
<feature type="binding site" evidence="1">
    <location>
        <position position="29"/>
    </location>
    <ligand>
        <name>[4Fe-4S] cluster</name>
        <dbReference type="ChEBI" id="CHEBI:49883"/>
        <label>1</label>
    </ligand>
</feature>
<feature type="binding site" evidence="1">
    <location>
        <position position="32"/>
    </location>
    <ligand>
        <name>[4Fe-4S] cluster</name>
        <dbReference type="ChEBI" id="CHEBI:49883"/>
        <label>1</label>
    </ligand>
</feature>
<feature type="binding site" evidence="1">
    <location>
        <position position="36"/>
    </location>
    <ligand>
        <name>[4Fe-4S] cluster</name>
        <dbReference type="ChEBI" id="CHEBI:49883"/>
        <label>1</label>
    </ligand>
</feature>
<feature type="binding site" evidence="1">
    <location>
        <position position="80"/>
    </location>
    <ligand>
        <name>[4Fe-4S] cluster</name>
        <dbReference type="ChEBI" id="CHEBI:49883"/>
        <label>2</label>
    </ligand>
</feature>
<feature type="binding site" evidence="1">
    <location>
        <position position="83"/>
    </location>
    <ligand>
        <name>[4Fe-4S] cluster</name>
        <dbReference type="ChEBI" id="CHEBI:49883"/>
        <label>2</label>
    </ligand>
</feature>
<feature type="binding site" evidence="1">
    <location>
        <position position="86"/>
    </location>
    <ligand>
        <name>[4Fe-4S] cluster</name>
        <dbReference type="ChEBI" id="CHEBI:49883"/>
        <label>2</label>
    </ligand>
</feature>
<feature type="binding site" evidence="1">
    <location>
        <position position="90"/>
    </location>
    <ligand>
        <name>[4Fe-4S] cluster</name>
        <dbReference type="ChEBI" id="CHEBI:49883"/>
        <label>2</label>
    </ligand>
</feature>
<accession>P55678</accession>
<gene>
    <name type="primary">fdxB</name>
    <name type="ordered locus">NGR_a01050</name>
    <name type="ORF">y4vS</name>
</gene>
<proteinExistence type="inferred from homology"/>